<protein>
    <recommendedName>
        <fullName evidence="1">UPF0229 protein KPN78578_11640</fullName>
    </recommendedName>
</protein>
<organism>
    <name type="scientific">Klebsiella pneumoniae subsp. pneumoniae (strain ATCC 700721 / MGH 78578)</name>
    <dbReference type="NCBI Taxonomy" id="272620"/>
    <lineage>
        <taxon>Bacteria</taxon>
        <taxon>Pseudomonadati</taxon>
        <taxon>Pseudomonadota</taxon>
        <taxon>Gammaproteobacteria</taxon>
        <taxon>Enterobacterales</taxon>
        <taxon>Enterobacteriaceae</taxon>
        <taxon>Klebsiella/Raoultella group</taxon>
        <taxon>Klebsiella</taxon>
        <taxon>Klebsiella pneumoniae complex</taxon>
    </lineage>
</organism>
<comment type="similarity">
    <text evidence="1">Belongs to the UPF0229 family.</text>
</comment>
<reference key="1">
    <citation type="submission" date="2006-09" db="EMBL/GenBank/DDBJ databases">
        <authorList>
            <consortium name="The Klebsiella pneumonia Genome Sequencing Project"/>
            <person name="McClelland M."/>
            <person name="Sanderson E.K."/>
            <person name="Spieth J."/>
            <person name="Clifton W.S."/>
            <person name="Latreille P."/>
            <person name="Sabo A."/>
            <person name="Pepin K."/>
            <person name="Bhonagiri V."/>
            <person name="Porwollik S."/>
            <person name="Ali J."/>
            <person name="Wilson R.K."/>
        </authorList>
    </citation>
    <scope>NUCLEOTIDE SEQUENCE [LARGE SCALE GENOMIC DNA]</scope>
    <source>
        <strain>ATCC 700721 / MGH 78578</strain>
    </source>
</reference>
<sequence>MTWFIDRRLNGKNKSAVNRQRFLRRYKAQIKQSISEAINKRSVTDIESGESVSIPTDDINEPMFHQGRGGLRNRVHPGNDHFVQNDRIERPQGGGGGGGSGQGQASADGEGKDEFVFQISKDEYLDLLFEDLALPNLKKNQHRQLNEFKTHRAGFTSNGVPANISVVRSLQNSLARRTAMTAGKRRELRALEEDLEAISRSEPVQLLEEERLRKEIAELRAKIERVPFIDTFDLRYKNYEKRPEPSSQAVMFCLMDVSGSMDQATKDMAKRFYILLYLFLSRTYKNVDVVYIRHHTQAKEVDEHEFFYSQETGGTIVSSALKLMDEVVQARYDPAQWNIYAAQASDGDNWADDSPLCHELLAKKILPVVRYYSYIEITRRAHQTLWREYEHLQATFDNFAMQHIRDQEDIYPVFRELFHKQSSKSEA</sequence>
<proteinExistence type="inferred from homology"/>
<name>Y1164_KLEP7</name>
<dbReference type="EMBL" id="CP000647">
    <property type="protein sequence ID" value="ABR76625.1"/>
    <property type="molecule type" value="Genomic_DNA"/>
</dbReference>
<dbReference type="RefSeq" id="WP_004152363.1">
    <property type="nucleotide sequence ID" value="NC_009648.1"/>
</dbReference>
<dbReference type="SMR" id="A6T7Q4"/>
<dbReference type="STRING" id="272620.KPN_01192"/>
<dbReference type="jPOST" id="A6T7Q4"/>
<dbReference type="PaxDb" id="272620-KPN_01192"/>
<dbReference type="EnsemblBacteria" id="ABR76625">
    <property type="protein sequence ID" value="ABR76625"/>
    <property type="gene ID" value="KPN_01192"/>
</dbReference>
<dbReference type="KEGG" id="kpn:KPN_01192"/>
<dbReference type="HOGENOM" id="CLU_049702_0_0_6"/>
<dbReference type="Proteomes" id="UP000000265">
    <property type="component" value="Chromosome"/>
</dbReference>
<dbReference type="HAMAP" id="MF_01232">
    <property type="entry name" value="UPF0229"/>
    <property type="match status" value="1"/>
</dbReference>
<dbReference type="InterPro" id="IPR006698">
    <property type="entry name" value="UPF0229"/>
</dbReference>
<dbReference type="NCBIfam" id="NF003707">
    <property type="entry name" value="PRK05325.1-2"/>
    <property type="match status" value="1"/>
</dbReference>
<dbReference type="NCBIfam" id="NF003708">
    <property type="entry name" value="PRK05325.1-3"/>
    <property type="match status" value="1"/>
</dbReference>
<dbReference type="PANTHER" id="PTHR30510">
    <property type="entry name" value="UPF0229 PROTEIN YEAH"/>
    <property type="match status" value="1"/>
</dbReference>
<dbReference type="PANTHER" id="PTHR30510:SF2">
    <property type="entry name" value="UPF0229 PROTEIN YEAH"/>
    <property type="match status" value="1"/>
</dbReference>
<dbReference type="Pfam" id="PF04285">
    <property type="entry name" value="DUF444"/>
    <property type="match status" value="1"/>
</dbReference>
<evidence type="ECO:0000255" key="1">
    <source>
        <dbReference type="HAMAP-Rule" id="MF_01232"/>
    </source>
</evidence>
<evidence type="ECO:0000256" key="2">
    <source>
        <dbReference type="SAM" id="MobiDB-lite"/>
    </source>
</evidence>
<gene>
    <name type="ordered locus">KPN78578_11640</name>
    <name type="ORF">KPN_01192</name>
</gene>
<accession>A6T7Q4</accession>
<feature type="chain" id="PRO_1000066861" description="UPF0229 protein KPN78578_11640">
    <location>
        <begin position="1"/>
        <end position="427"/>
    </location>
</feature>
<feature type="region of interest" description="Disordered" evidence="2">
    <location>
        <begin position="72"/>
        <end position="109"/>
    </location>
</feature>
<feature type="compositionally biased region" description="Basic and acidic residues" evidence="2">
    <location>
        <begin position="77"/>
        <end position="90"/>
    </location>
</feature>
<feature type="compositionally biased region" description="Gly residues" evidence="2">
    <location>
        <begin position="92"/>
        <end position="102"/>
    </location>
</feature>